<organism>
    <name type="scientific">Oleidesulfovibrio alaskensis (strain ATCC BAA-1058 / DSM 17464 / G20)</name>
    <name type="common">Desulfovibrio alaskensis</name>
    <dbReference type="NCBI Taxonomy" id="207559"/>
    <lineage>
        <taxon>Bacteria</taxon>
        <taxon>Pseudomonadati</taxon>
        <taxon>Thermodesulfobacteriota</taxon>
        <taxon>Desulfovibrionia</taxon>
        <taxon>Desulfovibrionales</taxon>
        <taxon>Desulfovibrionaceae</taxon>
        <taxon>Oleidesulfovibrio</taxon>
    </lineage>
</organism>
<proteinExistence type="inferred from homology"/>
<reference key="1">
    <citation type="journal article" date="2011" name="J. Bacteriol.">
        <title>Complete genome sequence and updated annotation of Desulfovibrio alaskensis G20.</title>
        <authorList>
            <person name="Hauser L.J."/>
            <person name="Land M.L."/>
            <person name="Brown S.D."/>
            <person name="Larimer F."/>
            <person name="Keller K.L."/>
            <person name="Rapp-Giles B.J."/>
            <person name="Price M.N."/>
            <person name="Lin M."/>
            <person name="Bruce D.C."/>
            <person name="Detter J.C."/>
            <person name="Tapia R."/>
            <person name="Han C.S."/>
            <person name="Goodwin L.A."/>
            <person name="Cheng J.F."/>
            <person name="Pitluck S."/>
            <person name="Copeland A."/>
            <person name="Lucas S."/>
            <person name="Nolan M."/>
            <person name="Lapidus A.L."/>
            <person name="Palumbo A.V."/>
            <person name="Wall J.D."/>
        </authorList>
    </citation>
    <scope>NUCLEOTIDE SEQUENCE [LARGE SCALE GENOMIC DNA]</scope>
    <source>
        <strain>ATCC BAA-1058 / DSM 17464 / G20</strain>
    </source>
</reference>
<feature type="chain" id="PRO_0000266109" description="CTP synthase">
    <location>
        <begin position="1"/>
        <end position="548"/>
    </location>
</feature>
<feature type="domain" description="Glutamine amidotransferase type-1" evidence="1">
    <location>
        <begin position="292"/>
        <end position="545"/>
    </location>
</feature>
<feature type="region of interest" description="Amidoligase domain" evidence="1">
    <location>
        <begin position="1"/>
        <end position="267"/>
    </location>
</feature>
<feature type="active site" description="Nucleophile; for glutamine hydrolysis" evidence="1">
    <location>
        <position position="381"/>
    </location>
</feature>
<feature type="active site" evidence="1">
    <location>
        <position position="518"/>
    </location>
</feature>
<feature type="active site" evidence="1">
    <location>
        <position position="520"/>
    </location>
</feature>
<feature type="binding site" evidence="1">
    <location>
        <position position="14"/>
    </location>
    <ligand>
        <name>CTP</name>
        <dbReference type="ChEBI" id="CHEBI:37563"/>
        <note>allosteric inhibitor</note>
    </ligand>
</feature>
<feature type="binding site" evidence="1">
    <location>
        <position position="14"/>
    </location>
    <ligand>
        <name>UTP</name>
        <dbReference type="ChEBI" id="CHEBI:46398"/>
    </ligand>
</feature>
<feature type="binding site" evidence="1">
    <location>
        <begin position="15"/>
        <end position="20"/>
    </location>
    <ligand>
        <name>ATP</name>
        <dbReference type="ChEBI" id="CHEBI:30616"/>
    </ligand>
</feature>
<feature type="binding site" evidence="1">
    <location>
        <position position="72"/>
    </location>
    <ligand>
        <name>ATP</name>
        <dbReference type="ChEBI" id="CHEBI:30616"/>
    </ligand>
</feature>
<feature type="binding site" evidence="1">
    <location>
        <position position="72"/>
    </location>
    <ligand>
        <name>Mg(2+)</name>
        <dbReference type="ChEBI" id="CHEBI:18420"/>
    </ligand>
</feature>
<feature type="binding site" evidence="1">
    <location>
        <position position="141"/>
    </location>
    <ligand>
        <name>Mg(2+)</name>
        <dbReference type="ChEBI" id="CHEBI:18420"/>
    </ligand>
</feature>
<feature type="binding site" evidence="1">
    <location>
        <begin position="148"/>
        <end position="150"/>
    </location>
    <ligand>
        <name>CTP</name>
        <dbReference type="ChEBI" id="CHEBI:37563"/>
        <note>allosteric inhibitor</note>
    </ligand>
</feature>
<feature type="binding site" evidence="1">
    <location>
        <begin position="188"/>
        <end position="193"/>
    </location>
    <ligand>
        <name>CTP</name>
        <dbReference type="ChEBI" id="CHEBI:37563"/>
        <note>allosteric inhibitor</note>
    </ligand>
</feature>
<feature type="binding site" evidence="1">
    <location>
        <begin position="188"/>
        <end position="193"/>
    </location>
    <ligand>
        <name>UTP</name>
        <dbReference type="ChEBI" id="CHEBI:46398"/>
    </ligand>
</feature>
<feature type="binding site" evidence="1">
    <location>
        <position position="224"/>
    </location>
    <ligand>
        <name>CTP</name>
        <dbReference type="ChEBI" id="CHEBI:37563"/>
        <note>allosteric inhibitor</note>
    </ligand>
</feature>
<feature type="binding site" evidence="1">
    <location>
        <position position="224"/>
    </location>
    <ligand>
        <name>UTP</name>
        <dbReference type="ChEBI" id="CHEBI:46398"/>
    </ligand>
</feature>
<feature type="binding site" evidence="1">
    <location>
        <position position="354"/>
    </location>
    <ligand>
        <name>L-glutamine</name>
        <dbReference type="ChEBI" id="CHEBI:58359"/>
    </ligand>
</feature>
<feature type="binding site" evidence="1">
    <location>
        <begin position="382"/>
        <end position="385"/>
    </location>
    <ligand>
        <name>L-glutamine</name>
        <dbReference type="ChEBI" id="CHEBI:58359"/>
    </ligand>
</feature>
<feature type="binding site" evidence="1">
    <location>
        <position position="405"/>
    </location>
    <ligand>
        <name>L-glutamine</name>
        <dbReference type="ChEBI" id="CHEBI:58359"/>
    </ligand>
</feature>
<feature type="binding site" evidence="1">
    <location>
        <position position="473"/>
    </location>
    <ligand>
        <name>L-glutamine</name>
        <dbReference type="ChEBI" id="CHEBI:58359"/>
    </ligand>
</feature>
<dbReference type="EC" id="6.3.4.2" evidence="1"/>
<dbReference type="EMBL" id="CP000112">
    <property type="protein sequence ID" value="ABB38562.1"/>
    <property type="molecule type" value="Genomic_DNA"/>
</dbReference>
<dbReference type="RefSeq" id="WP_011367692.1">
    <property type="nucleotide sequence ID" value="NC_007519.1"/>
</dbReference>
<dbReference type="SMR" id="Q310T4"/>
<dbReference type="STRING" id="207559.Dde_1765"/>
<dbReference type="MEROPS" id="C26.964"/>
<dbReference type="KEGG" id="dde:Dde_1765"/>
<dbReference type="eggNOG" id="COG0504">
    <property type="taxonomic scope" value="Bacteria"/>
</dbReference>
<dbReference type="HOGENOM" id="CLU_011675_5_0_7"/>
<dbReference type="UniPathway" id="UPA00159">
    <property type="reaction ID" value="UER00277"/>
</dbReference>
<dbReference type="Proteomes" id="UP000002710">
    <property type="component" value="Chromosome"/>
</dbReference>
<dbReference type="GO" id="GO:0005829">
    <property type="term" value="C:cytosol"/>
    <property type="evidence" value="ECO:0007669"/>
    <property type="project" value="TreeGrafter"/>
</dbReference>
<dbReference type="GO" id="GO:0005524">
    <property type="term" value="F:ATP binding"/>
    <property type="evidence" value="ECO:0007669"/>
    <property type="project" value="UniProtKB-KW"/>
</dbReference>
<dbReference type="GO" id="GO:0003883">
    <property type="term" value="F:CTP synthase activity"/>
    <property type="evidence" value="ECO:0007669"/>
    <property type="project" value="UniProtKB-UniRule"/>
</dbReference>
<dbReference type="GO" id="GO:0004359">
    <property type="term" value="F:glutaminase activity"/>
    <property type="evidence" value="ECO:0007669"/>
    <property type="project" value="RHEA"/>
</dbReference>
<dbReference type="GO" id="GO:0042802">
    <property type="term" value="F:identical protein binding"/>
    <property type="evidence" value="ECO:0007669"/>
    <property type="project" value="TreeGrafter"/>
</dbReference>
<dbReference type="GO" id="GO:0046872">
    <property type="term" value="F:metal ion binding"/>
    <property type="evidence" value="ECO:0007669"/>
    <property type="project" value="UniProtKB-KW"/>
</dbReference>
<dbReference type="GO" id="GO:0044210">
    <property type="term" value="P:'de novo' CTP biosynthetic process"/>
    <property type="evidence" value="ECO:0007669"/>
    <property type="project" value="UniProtKB-UniRule"/>
</dbReference>
<dbReference type="GO" id="GO:0019856">
    <property type="term" value="P:pyrimidine nucleobase biosynthetic process"/>
    <property type="evidence" value="ECO:0007669"/>
    <property type="project" value="TreeGrafter"/>
</dbReference>
<dbReference type="CDD" id="cd03113">
    <property type="entry name" value="CTPS_N"/>
    <property type="match status" value="1"/>
</dbReference>
<dbReference type="CDD" id="cd01746">
    <property type="entry name" value="GATase1_CTP_Synthase"/>
    <property type="match status" value="1"/>
</dbReference>
<dbReference type="FunFam" id="3.40.50.300:FF:000009">
    <property type="entry name" value="CTP synthase"/>
    <property type="match status" value="1"/>
</dbReference>
<dbReference type="FunFam" id="3.40.50.880:FF:000002">
    <property type="entry name" value="CTP synthase"/>
    <property type="match status" value="1"/>
</dbReference>
<dbReference type="Gene3D" id="3.40.50.880">
    <property type="match status" value="1"/>
</dbReference>
<dbReference type="Gene3D" id="3.40.50.300">
    <property type="entry name" value="P-loop containing nucleotide triphosphate hydrolases"/>
    <property type="match status" value="1"/>
</dbReference>
<dbReference type="HAMAP" id="MF_01227">
    <property type="entry name" value="PyrG"/>
    <property type="match status" value="1"/>
</dbReference>
<dbReference type="InterPro" id="IPR029062">
    <property type="entry name" value="Class_I_gatase-like"/>
</dbReference>
<dbReference type="InterPro" id="IPR004468">
    <property type="entry name" value="CTP_synthase"/>
</dbReference>
<dbReference type="InterPro" id="IPR017456">
    <property type="entry name" value="CTP_synthase_N"/>
</dbReference>
<dbReference type="InterPro" id="IPR017926">
    <property type="entry name" value="GATASE"/>
</dbReference>
<dbReference type="InterPro" id="IPR033828">
    <property type="entry name" value="GATase1_CTP_Synthase"/>
</dbReference>
<dbReference type="InterPro" id="IPR027417">
    <property type="entry name" value="P-loop_NTPase"/>
</dbReference>
<dbReference type="NCBIfam" id="NF003792">
    <property type="entry name" value="PRK05380.1"/>
    <property type="match status" value="1"/>
</dbReference>
<dbReference type="NCBIfam" id="TIGR00337">
    <property type="entry name" value="PyrG"/>
    <property type="match status" value="1"/>
</dbReference>
<dbReference type="PANTHER" id="PTHR11550">
    <property type="entry name" value="CTP SYNTHASE"/>
    <property type="match status" value="1"/>
</dbReference>
<dbReference type="PANTHER" id="PTHR11550:SF0">
    <property type="entry name" value="CTP SYNTHASE-RELATED"/>
    <property type="match status" value="1"/>
</dbReference>
<dbReference type="Pfam" id="PF06418">
    <property type="entry name" value="CTP_synth_N"/>
    <property type="match status" value="1"/>
</dbReference>
<dbReference type="Pfam" id="PF00117">
    <property type="entry name" value="GATase"/>
    <property type="match status" value="1"/>
</dbReference>
<dbReference type="SUPFAM" id="SSF52317">
    <property type="entry name" value="Class I glutamine amidotransferase-like"/>
    <property type="match status" value="1"/>
</dbReference>
<dbReference type="SUPFAM" id="SSF52540">
    <property type="entry name" value="P-loop containing nucleoside triphosphate hydrolases"/>
    <property type="match status" value="1"/>
</dbReference>
<dbReference type="PROSITE" id="PS51273">
    <property type="entry name" value="GATASE_TYPE_1"/>
    <property type="match status" value="1"/>
</dbReference>
<evidence type="ECO:0000255" key="1">
    <source>
        <dbReference type="HAMAP-Rule" id="MF_01227"/>
    </source>
</evidence>
<comment type="function">
    <text evidence="1">Catalyzes the ATP-dependent amination of UTP to CTP with either L-glutamine or ammonia as the source of nitrogen. Regulates intracellular CTP levels through interactions with the four ribonucleotide triphosphates.</text>
</comment>
<comment type="catalytic activity">
    <reaction evidence="1">
        <text>UTP + L-glutamine + ATP + H2O = CTP + L-glutamate + ADP + phosphate + 2 H(+)</text>
        <dbReference type="Rhea" id="RHEA:26426"/>
        <dbReference type="ChEBI" id="CHEBI:15377"/>
        <dbReference type="ChEBI" id="CHEBI:15378"/>
        <dbReference type="ChEBI" id="CHEBI:29985"/>
        <dbReference type="ChEBI" id="CHEBI:30616"/>
        <dbReference type="ChEBI" id="CHEBI:37563"/>
        <dbReference type="ChEBI" id="CHEBI:43474"/>
        <dbReference type="ChEBI" id="CHEBI:46398"/>
        <dbReference type="ChEBI" id="CHEBI:58359"/>
        <dbReference type="ChEBI" id="CHEBI:456216"/>
        <dbReference type="EC" id="6.3.4.2"/>
    </reaction>
</comment>
<comment type="catalytic activity">
    <reaction evidence="1">
        <text>L-glutamine + H2O = L-glutamate + NH4(+)</text>
        <dbReference type="Rhea" id="RHEA:15889"/>
        <dbReference type="ChEBI" id="CHEBI:15377"/>
        <dbReference type="ChEBI" id="CHEBI:28938"/>
        <dbReference type="ChEBI" id="CHEBI:29985"/>
        <dbReference type="ChEBI" id="CHEBI:58359"/>
    </reaction>
</comment>
<comment type="catalytic activity">
    <reaction evidence="1">
        <text>UTP + NH4(+) + ATP = CTP + ADP + phosphate + 2 H(+)</text>
        <dbReference type="Rhea" id="RHEA:16597"/>
        <dbReference type="ChEBI" id="CHEBI:15378"/>
        <dbReference type="ChEBI" id="CHEBI:28938"/>
        <dbReference type="ChEBI" id="CHEBI:30616"/>
        <dbReference type="ChEBI" id="CHEBI:37563"/>
        <dbReference type="ChEBI" id="CHEBI:43474"/>
        <dbReference type="ChEBI" id="CHEBI:46398"/>
        <dbReference type="ChEBI" id="CHEBI:456216"/>
    </reaction>
</comment>
<comment type="activity regulation">
    <text evidence="1">Allosterically activated by GTP, when glutamine is the substrate; GTP has no effect on the reaction when ammonia is the substrate. The allosteric effector GTP functions by stabilizing the protein conformation that binds the tetrahedral intermediate(s) formed during glutamine hydrolysis. Inhibited by the product CTP, via allosteric rather than competitive inhibition.</text>
</comment>
<comment type="pathway">
    <text evidence="1">Pyrimidine metabolism; CTP biosynthesis via de novo pathway; CTP from UDP: step 2/2.</text>
</comment>
<comment type="subunit">
    <text evidence="1">Homotetramer.</text>
</comment>
<comment type="miscellaneous">
    <text evidence="1">CTPSs have evolved a hybrid strategy for distinguishing between UTP and CTP. The overlapping regions of the product feedback inhibitory and substrate sites recognize a common feature in both compounds, the triphosphate moiety. To differentiate isosteric substrate and product pyrimidine rings, an additional pocket far from the expected kinase/ligase catalytic site, specifically recognizes the cytosine and ribose portions of the product inhibitor.</text>
</comment>
<comment type="similarity">
    <text evidence="1">Belongs to the CTP synthase family.</text>
</comment>
<name>PYRG_OLEA2</name>
<sequence>MKTKFIFITGGVLSSLGKGLAAASVGALLQARGLKVTIQKLDPYINVDPGTMNPFQHGEVYVTDDGAETDLDLGHYERYLGIPMNQRNNYTSGSIYHRVITKERRGDYLGGTVQVIPHITDEIKSVIMNLASDDLDVALVEIGGTVGDIEGQPFLEAIRQLRSDLGRDRCMYIHLTLVPYLAAAGEHKTKPTQHSVKELRSIGIQPDIILCRCEKAVTDDLKHKIALFCNVEKDAVFSAVDVKNIYEVPLSFYEEGFDQKIAIMLQLPAKNPDLSKWQELVDTCANPQGKVTIGIVGKYVDLKEAYKSLHEALIHGGVANKLAVELKYVNSELITDENVAESLAGLDGILVPGGFGSRGVEGKIRAIRYARENKVPFFGICLGMQCAVIEFARNVAGLPAANSEEFDEQTPDKVIYLMTEWFDFRSKQVERRDSGSEKGGTMRLGSYPCAVVKGTNAFTAYQAEKVDERHRHRFEFNNAYLDKLKEAGLVFSGLSPDGELVEMVEIKDHPWFLGCQFHPEFKSYPMTPHPLFREFIKAAGKQAVKSKR</sequence>
<accession>Q310T4</accession>
<keyword id="KW-0067">ATP-binding</keyword>
<keyword id="KW-0315">Glutamine amidotransferase</keyword>
<keyword id="KW-0436">Ligase</keyword>
<keyword id="KW-0460">Magnesium</keyword>
<keyword id="KW-0479">Metal-binding</keyword>
<keyword id="KW-0547">Nucleotide-binding</keyword>
<keyword id="KW-0665">Pyrimidine biosynthesis</keyword>
<keyword id="KW-1185">Reference proteome</keyword>
<protein>
    <recommendedName>
        <fullName evidence="1">CTP synthase</fullName>
        <ecNumber evidence="1">6.3.4.2</ecNumber>
    </recommendedName>
    <alternativeName>
        <fullName evidence="1">Cytidine 5'-triphosphate synthase</fullName>
    </alternativeName>
    <alternativeName>
        <fullName evidence="1">Cytidine triphosphate synthetase</fullName>
        <shortName evidence="1">CTP synthetase</shortName>
        <shortName evidence="1">CTPS</shortName>
    </alternativeName>
    <alternativeName>
        <fullName evidence="1">UTP--ammonia ligase</fullName>
    </alternativeName>
</protein>
<gene>
    <name evidence="1" type="primary">pyrG</name>
    <name type="ordered locus">Dde_1765</name>
</gene>